<reference key="1">
    <citation type="journal article" date="2007" name="BMC Biol.">
        <title>A clade uniting the green algae Mesostigma viride and Chlorokybus atmophyticus represents the deepest branch of the Streptophyta in chloroplast genome-based phylogenies.</title>
        <authorList>
            <person name="Lemieux C."/>
            <person name="Otis C."/>
            <person name="Turmel M."/>
        </authorList>
    </citation>
    <scope>NUCLEOTIDE SEQUENCE [LARGE SCALE GENOMIC DNA]</scope>
    <source>
        <strain>SAG 48.80</strain>
    </source>
</reference>
<proteinExistence type="inferred from homology"/>
<evidence type="ECO:0000250" key="1"/>
<evidence type="ECO:0000305" key="2"/>
<geneLocation type="chloroplast"/>
<feature type="chain" id="PRO_0000290978" description="Small ribosomal subunit protein uS8c">
    <location>
        <begin position="1"/>
        <end position="133"/>
    </location>
</feature>
<comment type="function">
    <text evidence="1">One of the primary rRNA binding proteins, it binds directly to 16S rRNA central domain where it helps coordinate assembly of the platform of the 30S subunit.</text>
</comment>
<comment type="subunit">
    <text evidence="1">Part of the 30S ribosomal subunit.</text>
</comment>
<comment type="subcellular location">
    <subcellularLocation>
        <location>Plastid</location>
        <location>Chloroplast</location>
    </subcellularLocation>
</comment>
<comment type="similarity">
    <text evidence="2">Belongs to the universal ribosomal protein uS8 family.</text>
</comment>
<organism>
    <name type="scientific">Chlorokybus atmophyticus</name>
    <name type="common">Soil alga</name>
    <dbReference type="NCBI Taxonomy" id="3144"/>
    <lineage>
        <taxon>Eukaryota</taxon>
        <taxon>Viridiplantae</taxon>
        <taxon>Streptophyta</taxon>
        <taxon>Chlorokybophyceae</taxon>
        <taxon>Chlorokybales</taxon>
        <taxon>Chlorokybaceae</taxon>
        <taxon>Chlorokybus</taxon>
    </lineage>
</organism>
<dbReference type="EMBL" id="DQ422812">
    <property type="protein sequence ID" value="ABD62254.2"/>
    <property type="molecule type" value="Genomic_DNA"/>
</dbReference>
<dbReference type="RefSeq" id="YP_001019085.1">
    <property type="nucleotide sequence ID" value="NC_008822.1"/>
</dbReference>
<dbReference type="SMR" id="Q19VB3"/>
<dbReference type="GeneID" id="4783265"/>
<dbReference type="GO" id="GO:0009507">
    <property type="term" value="C:chloroplast"/>
    <property type="evidence" value="ECO:0007669"/>
    <property type="project" value="UniProtKB-SubCell"/>
</dbReference>
<dbReference type="GO" id="GO:1990904">
    <property type="term" value="C:ribonucleoprotein complex"/>
    <property type="evidence" value="ECO:0007669"/>
    <property type="project" value="UniProtKB-KW"/>
</dbReference>
<dbReference type="GO" id="GO:0005840">
    <property type="term" value="C:ribosome"/>
    <property type="evidence" value="ECO:0007669"/>
    <property type="project" value="UniProtKB-KW"/>
</dbReference>
<dbReference type="GO" id="GO:0019843">
    <property type="term" value="F:rRNA binding"/>
    <property type="evidence" value="ECO:0007669"/>
    <property type="project" value="UniProtKB-UniRule"/>
</dbReference>
<dbReference type="GO" id="GO:0003735">
    <property type="term" value="F:structural constituent of ribosome"/>
    <property type="evidence" value="ECO:0007669"/>
    <property type="project" value="InterPro"/>
</dbReference>
<dbReference type="GO" id="GO:0006412">
    <property type="term" value="P:translation"/>
    <property type="evidence" value="ECO:0007669"/>
    <property type="project" value="UniProtKB-UniRule"/>
</dbReference>
<dbReference type="FunFam" id="3.30.1490.10:FF:000001">
    <property type="entry name" value="30S ribosomal protein S8"/>
    <property type="match status" value="1"/>
</dbReference>
<dbReference type="Gene3D" id="3.30.1370.30">
    <property type="match status" value="1"/>
</dbReference>
<dbReference type="Gene3D" id="3.30.1490.10">
    <property type="match status" value="1"/>
</dbReference>
<dbReference type="HAMAP" id="MF_01302_B">
    <property type="entry name" value="Ribosomal_uS8_B"/>
    <property type="match status" value="1"/>
</dbReference>
<dbReference type="InterPro" id="IPR000630">
    <property type="entry name" value="Ribosomal_uS8"/>
</dbReference>
<dbReference type="InterPro" id="IPR047863">
    <property type="entry name" value="Ribosomal_uS8_CS"/>
</dbReference>
<dbReference type="InterPro" id="IPR035987">
    <property type="entry name" value="Ribosomal_uS8_sf"/>
</dbReference>
<dbReference type="NCBIfam" id="NF001109">
    <property type="entry name" value="PRK00136.1"/>
    <property type="match status" value="1"/>
</dbReference>
<dbReference type="PANTHER" id="PTHR11758">
    <property type="entry name" value="40S RIBOSOMAL PROTEIN S15A"/>
    <property type="match status" value="1"/>
</dbReference>
<dbReference type="Pfam" id="PF00410">
    <property type="entry name" value="Ribosomal_S8"/>
    <property type="match status" value="1"/>
</dbReference>
<dbReference type="SUPFAM" id="SSF56047">
    <property type="entry name" value="Ribosomal protein S8"/>
    <property type="match status" value="1"/>
</dbReference>
<dbReference type="PROSITE" id="PS00053">
    <property type="entry name" value="RIBOSOMAL_S8"/>
    <property type="match status" value="1"/>
</dbReference>
<accession>Q19VB3</accession>
<sequence length="133" mass="14787">MVNDTVADMITRIRNANLVRQTNVQVIASNTTNSIASILKDEGFVEKIQTIETDSGLSSLLITLKYQGKRRKPYITALKRISKPGLRVYANSREIPRVLGGIGIAIISTSKGIMTDRRARHEKVGGEILCYVW</sequence>
<name>RR8_CHLAT</name>
<keyword id="KW-0150">Chloroplast</keyword>
<keyword id="KW-0934">Plastid</keyword>
<keyword id="KW-0687">Ribonucleoprotein</keyword>
<keyword id="KW-0689">Ribosomal protein</keyword>
<keyword id="KW-0694">RNA-binding</keyword>
<keyword id="KW-0699">rRNA-binding</keyword>
<gene>
    <name type="primary">rps8</name>
</gene>
<protein>
    <recommendedName>
        <fullName evidence="2">Small ribosomal subunit protein uS8c</fullName>
    </recommendedName>
    <alternativeName>
        <fullName>30S ribosomal protein S8, chloroplastic</fullName>
    </alternativeName>
</protein>